<comment type="function">
    <text evidence="2">Involved in base excision repair of DNA damaged by oxidation or by mutagenic agents. Acts as a DNA glycosylase that recognizes and removes damaged bases. Has a preference for oxidized purines, such as 7,8-dihydro-8-oxoguanine (8-oxoG). Has AP (apurinic/apyrimidinic) lyase activity and introduces nicks in the DNA strand. Cleaves the DNA backbone by beta-delta elimination to generate a single-strand break at the site of the removed base with both 3'- and 5'-phosphates.</text>
</comment>
<comment type="catalytic activity">
    <reaction evidence="2">
        <text>Hydrolysis of DNA containing ring-opened 7-methylguanine residues, releasing 2,6-diamino-4-hydroxy-5-(N-methyl)formamidopyrimidine.</text>
        <dbReference type="EC" id="3.2.2.23"/>
    </reaction>
</comment>
<comment type="catalytic activity">
    <reaction evidence="2">
        <text>2'-deoxyribonucleotide-(2'-deoxyribose 5'-phosphate)-2'-deoxyribonucleotide-DNA = a 3'-end 2'-deoxyribonucleotide-(2,3-dehydro-2,3-deoxyribose 5'-phosphate)-DNA + a 5'-end 5'-phospho-2'-deoxyribonucleoside-DNA + H(+)</text>
        <dbReference type="Rhea" id="RHEA:66592"/>
        <dbReference type="Rhea" id="RHEA-COMP:13180"/>
        <dbReference type="Rhea" id="RHEA-COMP:16897"/>
        <dbReference type="Rhea" id="RHEA-COMP:17067"/>
        <dbReference type="ChEBI" id="CHEBI:15378"/>
        <dbReference type="ChEBI" id="CHEBI:136412"/>
        <dbReference type="ChEBI" id="CHEBI:157695"/>
        <dbReference type="ChEBI" id="CHEBI:167181"/>
        <dbReference type="EC" id="4.2.99.18"/>
    </reaction>
</comment>
<comment type="cofactor">
    <cofactor evidence="2">
        <name>Zn(2+)</name>
        <dbReference type="ChEBI" id="CHEBI:29105"/>
    </cofactor>
    <text evidence="2">Binds 1 zinc ion per subunit.</text>
</comment>
<comment type="subunit">
    <text evidence="2">Monomer.</text>
</comment>
<comment type="similarity">
    <text evidence="2">Belongs to the FPG family.</text>
</comment>
<keyword id="KW-0227">DNA damage</keyword>
<keyword id="KW-0234">DNA repair</keyword>
<keyword id="KW-0238">DNA-binding</keyword>
<keyword id="KW-0326">Glycosidase</keyword>
<keyword id="KW-0378">Hydrolase</keyword>
<keyword id="KW-0456">Lyase</keyword>
<keyword id="KW-0479">Metal-binding</keyword>
<keyword id="KW-0511">Multifunctional enzyme</keyword>
<keyword id="KW-0862">Zinc</keyword>
<keyword id="KW-0863">Zinc-finger</keyword>
<gene>
    <name evidence="2" type="primary">mutM</name>
    <name evidence="2" type="synonym">fpg</name>
    <name type="ordered locus">LGAS_1420</name>
</gene>
<proteinExistence type="inferred from homology"/>
<reference key="1">
    <citation type="journal article" date="2006" name="Proc. Natl. Acad. Sci. U.S.A.">
        <title>Comparative genomics of the lactic acid bacteria.</title>
        <authorList>
            <person name="Makarova K.S."/>
            <person name="Slesarev A."/>
            <person name="Wolf Y.I."/>
            <person name="Sorokin A."/>
            <person name="Mirkin B."/>
            <person name="Koonin E.V."/>
            <person name="Pavlov A."/>
            <person name="Pavlova N."/>
            <person name="Karamychev V."/>
            <person name="Polouchine N."/>
            <person name="Shakhova V."/>
            <person name="Grigoriev I."/>
            <person name="Lou Y."/>
            <person name="Rohksar D."/>
            <person name="Lucas S."/>
            <person name="Huang K."/>
            <person name="Goodstein D.M."/>
            <person name="Hawkins T."/>
            <person name="Plengvidhya V."/>
            <person name="Welker D."/>
            <person name="Hughes J."/>
            <person name="Goh Y."/>
            <person name="Benson A."/>
            <person name="Baldwin K."/>
            <person name="Lee J.-H."/>
            <person name="Diaz-Muniz I."/>
            <person name="Dosti B."/>
            <person name="Smeianov V."/>
            <person name="Wechter W."/>
            <person name="Barabote R."/>
            <person name="Lorca G."/>
            <person name="Altermann E."/>
            <person name="Barrangou R."/>
            <person name="Ganesan B."/>
            <person name="Xie Y."/>
            <person name="Rawsthorne H."/>
            <person name="Tamir D."/>
            <person name="Parker C."/>
            <person name="Breidt F."/>
            <person name="Broadbent J.R."/>
            <person name="Hutkins R."/>
            <person name="O'Sullivan D."/>
            <person name="Steele J."/>
            <person name="Unlu G."/>
            <person name="Saier M.H. Jr."/>
            <person name="Klaenhammer T."/>
            <person name="Richardson P."/>
            <person name="Kozyavkin S."/>
            <person name="Weimer B.C."/>
            <person name="Mills D.A."/>
        </authorList>
    </citation>
    <scope>NUCLEOTIDE SEQUENCE [LARGE SCALE GENOMIC DNA]</scope>
    <source>
        <strain>ATCC 33323 / DSM 20243 / BCRC 14619 / CIP 102991 / JCM 1131 / KCTC 3163 / NCIMB 11718 / NCTC 13722 / AM63</strain>
    </source>
</reference>
<sequence length="276" mass="31434">MPEMPEVETVRRTLTPLVKGKTIAKINIWYPKIIVNDPAEFVKKLTNKRILKIDRYGKYLLFRFNDDLTMVSHLRMEGKYHLVSPDTPKGKHEHVEFIFTDGTALRYDDVRKFGRMHLVETGTERKTTGIRHLGPEPNTAEFNLKYFVDALSQKKKNIKNTLLDQTIVCGLGNIYVDEVLWKSKIHPLSSAKAIPADKVKNLYQNINHTIAIATKERGTTVHTYLDANGEIGGYQKMLQVYGHAGEECSSCGTILEKIKVNGRGTTFCPHCQVLYK</sequence>
<accession>Q041U1</accession>
<protein>
    <recommendedName>
        <fullName evidence="2">Formamidopyrimidine-DNA glycosylase</fullName>
        <shortName evidence="2">Fapy-DNA glycosylase</shortName>
        <ecNumber evidence="2">3.2.2.23</ecNumber>
    </recommendedName>
    <alternativeName>
        <fullName evidence="2">DNA-(apurinic or apyrimidinic site) lyase MutM</fullName>
        <shortName evidence="2">AP lyase MutM</shortName>
        <ecNumber evidence="2">4.2.99.18</ecNumber>
    </alternativeName>
</protein>
<name>FPG_LACGA</name>
<dbReference type="EC" id="3.2.2.23" evidence="2"/>
<dbReference type="EC" id="4.2.99.18" evidence="2"/>
<dbReference type="EMBL" id="CP000413">
    <property type="protein sequence ID" value="ABJ60781.1"/>
    <property type="molecule type" value="Genomic_DNA"/>
</dbReference>
<dbReference type="RefSeq" id="WP_003652207.1">
    <property type="nucleotide sequence ID" value="NZ_WBMG01000003.1"/>
</dbReference>
<dbReference type="SMR" id="Q041U1"/>
<dbReference type="GeneID" id="29639358"/>
<dbReference type="KEGG" id="lga:LGAS_1420"/>
<dbReference type="HOGENOM" id="CLU_038423_1_2_9"/>
<dbReference type="BioCyc" id="LGAS324831:G1G6Y-1414-MONOMER"/>
<dbReference type="Proteomes" id="UP000000664">
    <property type="component" value="Chromosome"/>
</dbReference>
<dbReference type="GO" id="GO:0034039">
    <property type="term" value="F:8-oxo-7,8-dihydroguanine DNA N-glycosylase activity"/>
    <property type="evidence" value="ECO:0007669"/>
    <property type="project" value="TreeGrafter"/>
</dbReference>
<dbReference type="GO" id="GO:0140078">
    <property type="term" value="F:class I DNA-(apurinic or apyrimidinic site) endonuclease activity"/>
    <property type="evidence" value="ECO:0007669"/>
    <property type="project" value="UniProtKB-EC"/>
</dbReference>
<dbReference type="GO" id="GO:0003684">
    <property type="term" value="F:damaged DNA binding"/>
    <property type="evidence" value="ECO:0007669"/>
    <property type="project" value="InterPro"/>
</dbReference>
<dbReference type="GO" id="GO:0008270">
    <property type="term" value="F:zinc ion binding"/>
    <property type="evidence" value="ECO:0007669"/>
    <property type="project" value="UniProtKB-UniRule"/>
</dbReference>
<dbReference type="GO" id="GO:0006284">
    <property type="term" value="P:base-excision repair"/>
    <property type="evidence" value="ECO:0007669"/>
    <property type="project" value="InterPro"/>
</dbReference>
<dbReference type="CDD" id="cd08966">
    <property type="entry name" value="EcFpg-like_N"/>
    <property type="match status" value="1"/>
</dbReference>
<dbReference type="FunFam" id="1.10.8.50:FF:000003">
    <property type="entry name" value="Formamidopyrimidine-DNA glycosylase"/>
    <property type="match status" value="1"/>
</dbReference>
<dbReference type="FunFam" id="3.20.190.10:FF:000001">
    <property type="entry name" value="Formamidopyrimidine-DNA glycosylase"/>
    <property type="match status" value="1"/>
</dbReference>
<dbReference type="Gene3D" id="1.10.8.50">
    <property type="match status" value="1"/>
</dbReference>
<dbReference type="Gene3D" id="3.20.190.10">
    <property type="entry name" value="MutM-like, N-terminal"/>
    <property type="match status" value="1"/>
</dbReference>
<dbReference type="HAMAP" id="MF_00103">
    <property type="entry name" value="Fapy_DNA_glycosyl"/>
    <property type="match status" value="1"/>
</dbReference>
<dbReference type="InterPro" id="IPR015886">
    <property type="entry name" value="DNA_glyclase/AP_lyase_DNA-bd"/>
</dbReference>
<dbReference type="InterPro" id="IPR015887">
    <property type="entry name" value="DNA_glyclase_Znf_dom_DNA_BS"/>
</dbReference>
<dbReference type="InterPro" id="IPR020629">
    <property type="entry name" value="Formamido-pyr_DNA_Glyclase"/>
</dbReference>
<dbReference type="InterPro" id="IPR012319">
    <property type="entry name" value="FPG_cat"/>
</dbReference>
<dbReference type="InterPro" id="IPR035937">
    <property type="entry name" value="MutM-like_N-ter"/>
</dbReference>
<dbReference type="InterPro" id="IPR010979">
    <property type="entry name" value="Ribosomal_uS13-like_H2TH"/>
</dbReference>
<dbReference type="InterPro" id="IPR000214">
    <property type="entry name" value="Znf_DNA_glyclase/AP_lyase"/>
</dbReference>
<dbReference type="InterPro" id="IPR010663">
    <property type="entry name" value="Znf_FPG/IleRS"/>
</dbReference>
<dbReference type="NCBIfam" id="TIGR00577">
    <property type="entry name" value="fpg"/>
    <property type="match status" value="1"/>
</dbReference>
<dbReference type="NCBIfam" id="NF002211">
    <property type="entry name" value="PRK01103.1"/>
    <property type="match status" value="1"/>
</dbReference>
<dbReference type="PANTHER" id="PTHR22993">
    <property type="entry name" value="FORMAMIDOPYRIMIDINE-DNA GLYCOSYLASE"/>
    <property type="match status" value="1"/>
</dbReference>
<dbReference type="PANTHER" id="PTHR22993:SF9">
    <property type="entry name" value="FORMAMIDOPYRIMIDINE-DNA GLYCOSYLASE"/>
    <property type="match status" value="1"/>
</dbReference>
<dbReference type="Pfam" id="PF01149">
    <property type="entry name" value="Fapy_DNA_glyco"/>
    <property type="match status" value="1"/>
</dbReference>
<dbReference type="Pfam" id="PF06831">
    <property type="entry name" value="H2TH"/>
    <property type="match status" value="1"/>
</dbReference>
<dbReference type="Pfam" id="PF06827">
    <property type="entry name" value="zf-FPG_IleRS"/>
    <property type="match status" value="1"/>
</dbReference>
<dbReference type="SMART" id="SM00898">
    <property type="entry name" value="Fapy_DNA_glyco"/>
    <property type="match status" value="1"/>
</dbReference>
<dbReference type="SMART" id="SM01232">
    <property type="entry name" value="H2TH"/>
    <property type="match status" value="1"/>
</dbReference>
<dbReference type="SUPFAM" id="SSF57716">
    <property type="entry name" value="Glucocorticoid receptor-like (DNA-binding domain)"/>
    <property type="match status" value="1"/>
</dbReference>
<dbReference type="SUPFAM" id="SSF81624">
    <property type="entry name" value="N-terminal domain of MutM-like DNA repair proteins"/>
    <property type="match status" value="1"/>
</dbReference>
<dbReference type="SUPFAM" id="SSF46946">
    <property type="entry name" value="S13-like H2TH domain"/>
    <property type="match status" value="1"/>
</dbReference>
<dbReference type="PROSITE" id="PS51068">
    <property type="entry name" value="FPG_CAT"/>
    <property type="match status" value="1"/>
</dbReference>
<dbReference type="PROSITE" id="PS01242">
    <property type="entry name" value="ZF_FPG_1"/>
    <property type="match status" value="1"/>
</dbReference>
<dbReference type="PROSITE" id="PS51066">
    <property type="entry name" value="ZF_FPG_2"/>
    <property type="match status" value="1"/>
</dbReference>
<organism>
    <name type="scientific">Lactobacillus gasseri (strain ATCC 33323 / DSM 20243 / BCRC 14619 / CIP 102991 / JCM 1131 / KCTC 3163 / NCIMB 11718 / NCTC 13722 / AM63)</name>
    <dbReference type="NCBI Taxonomy" id="324831"/>
    <lineage>
        <taxon>Bacteria</taxon>
        <taxon>Bacillati</taxon>
        <taxon>Bacillota</taxon>
        <taxon>Bacilli</taxon>
        <taxon>Lactobacillales</taxon>
        <taxon>Lactobacillaceae</taxon>
        <taxon>Lactobacillus</taxon>
    </lineage>
</organism>
<evidence type="ECO:0000250" key="1"/>
<evidence type="ECO:0000255" key="2">
    <source>
        <dbReference type="HAMAP-Rule" id="MF_00103"/>
    </source>
</evidence>
<feature type="initiator methionine" description="Removed" evidence="1">
    <location>
        <position position="1"/>
    </location>
</feature>
<feature type="chain" id="PRO_1000008710" description="Formamidopyrimidine-DNA glycosylase">
    <location>
        <begin position="2"/>
        <end position="276"/>
    </location>
</feature>
<feature type="zinc finger region" description="FPG-type" evidence="2">
    <location>
        <begin position="239"/>
        <end position="273"/>
    </location>
</feature>
<feature type="active site" description="Schiff-base intermediate with DNA" evidence="2">
    <location>
        <position position="2"/>
    </location>
</feature>
<feature type="active site" description="Proton donor" evidence="2">
    <location>
        <position position="3"/>
    </location>
</feature>
<feature type="active site" description="Proton donor; for beta-elimination activity" evidence="2">
    <location>
        <position position="58"/>
    </location>
</feature>
<feature type="active site" description="Proton donor; for delta-elimination activity" evidence="2">
    <location>
        <position position="263"/>
    </location>
</feature>
<feature type="binding site" evidence="2">
    <location>
        <position position="92"/>
    </location>
    <ligand>
        <name>DNA</name>
        <dbReference type="ChEBI" id="CHEBI:16991"/>
    </ligand>
</feature>
<feature type="binding site" evidence="2">
    <location>
        <position position="111"/>
    </location>
    <ligand>
        <name>DNA</name>
        <dbReference type="ChEBI" id="CHEBI:16991"/>
    </ligand>
</feature>
<feature type="binding site" evidence="2">
    <location>
        <position position="154"/>
    </location>
    <ligand>
        <name>DNA</name>
        <dbReference type="ChEBI" id="CHEBI:16991"/>
    </ligand>
</feature>